<keyword id="KW-0131">Cell cycle</keyword>
<keyword id="KW-0132">Cell division</keyword>
<keyword id="KW-0159">Chromosome partition</keyword>
<keyword id="KW-0963">Cytoplasm</keyword>
<feature type="chain" id="PRO_0000211110" description="Segregation and condensation protein A">
    <location>
        <begin position="1"/>
        <end position="235"/>
    </location>
</feature>
<accession>Q7ZAL5</accession>
<gene>
    <name evidence="1" type="primary">scpA</name>
    <name type="ordered locus">gbs1644</name>
</gene>
<organism>
    <name type="scientific">Streptococcus agalactiae serotype III (strain NEM316)</name>
    <dbReference type="NCBI Taxonomy" id="211110"/>
    <lineage>
        <taxon>Bacteria</taxon>
        <taxon>Bacillati</taxon>
        <taxon>Bacillota</taxon>
        <taxon>Bacilli</taxon>
        <taxon>Lactobacillales</taxon>
        <taxon>Streptococcaceae</taxon>
        <taxon>Streptococcus</taxon>
    </lineage>
</organism>
<evidence type="ECO:0000255" key="1">
    <source>
        <dbReference type="HAMAP-Rule" id="MF_01805"/>
    </source>
</evidence>
<comment type="function">
    <text evidence="1">Participates in chromosomal partition during cell division. May act via the formation of a condensin-like complex containing Smc and ScpB that pull DNA away from mid-cell into both cell halves.</text>
</comment>
<comment type="subunit">
    <text evidence="1">Component of a cohesin-like complex composed of ScpA, ScpB and the Smc homodimer, in which ScpA and ScpB bind to the head domain of Smc. The presence of the three proteins is required for the association of the complex with DNA.</text>
</comment>
<comment type="subcellular location">
    <subcellularLocation>
        <location evidence="1">Cytoplasm</location>
    </subcellularLocation>
    <text evidence="1">Associated with two foci at the outer edges of the nucleoid region in young cells, and at four foci within both cell halves in older cells.</text>
</comment>
<comment type="similarity">
    <text evidence="1">Belongs to the ScpA family.</text>
</comment>
<dbReference type="EMBL" id="AL766852">
    <property type="protein sequence ID" value="CAD47303.1"/>
    <property type="molecule type" value="Genomic_DNA"/>
</dbReference>
<dbReference type="RefSeq" id="WP_000351874.1">
    <property type="nucleotide sequence ID" value="NC_004368.1"/>
</dbReference>
<dbReference type="SMR" id="Q7ZAL5"/>
<dbReference type="KEGG" id="san:gbs1644"/>
<dbReference type="eggNOG" id="COG1354">
    <property type="taxonomic scope" value="Bacteria"/>
</dbReference>
<dbReference type="HOGENOM" id="CLU_038686_3_3_9"/>
<dbReference type="Proteomes" id="UP000000823">
    <property type="component" value="Chromosome"/>
</dbReference>
<dbReference type="GO" id="GO:0005737">
    <property type="term" value="C:cytoplasm"/>
    <property type="evidence" value="ECO:0007669"/>
    <property type="project" value="UniProtKB-SubCell"/>
</dbReference>
<dbReference type="GO" id="GO:0051301">
    <property type="term" value="P:cell division"/>
    <property type="evidence" value="ECO:0007669"/>
    <property type="project" value="UniProtKB-KW"/>
</dbReference>
<dbReference type="GO" id="GO:0007059">
    <property type="term" value="P:chromosome segregation"/>
    <property type="evidence" value="ECO:0007669"/>
    <property type="project" value="UniProtKB-UniRule"/>
</dbReference>
<dbReference type="GO" id="GO:0006260">
    <property type="term" value="P:DNA replication"/>
    <property type="evidence" value="ECO:0007669"/>
    <property type="project" value="UniProtKB-UniRule"/>
</dbReference>
<dbReference type="Gene3D" id="6.10.250.2410">
    <property type="match status" value="1"/>
</dbReference>
<dbReference type="HAMAP" id="MF_01805">
    <property type="entry name" value="ScpA"/>
    <property type="match status" value="1"/>
</dbReference>
<dbReference type="InterPro" id="IPR003768">
    <property type="entry name" value="ScpA"/>
</dbReference>
<dbReference type="NCBIfam" id="NF000993">
    <property type="entry name" value="PRK00104.1-2"/>
    <property type="match status" value="1"/>
</dbReference>
<dbReference type="PANTHER" id="PTHR33969">
    <property type="entry name" value="SEGREGATION AND CONDENSATION PROTEIN A"/>
    <property type="match status" value="1"/>
</dbReference>
<dbReference type="PANTHER" id="PTHR33969:SF2">
    <property type="entry name" value="SEGREGATION AND CONDENSATION PROTEIN A"/>
    <property type="match status" value="1"/>
</dbReference>
<dbReference type="Pfam" id="PF02616">
    <property type="entry name" value="SMC_ScpA"/>
    <property type="match status" value="1"/>
</dbReference>
<reference key="1">
    <citation type="journal article" date="2002" name="Mol. Microbiol.">
        <title>Genome sequence of Streptococcus agalactiae, a pathogen causing invasive neonatal disease.</title>
        <authorList>
            <person name="Glaser P."/>
            <person name="Rusniok C."/>
            <person name="Buchrieser C."/>
            <person name="Chevalier F."/>
            <person name="Frangeul L."/>
            <person name="Msadek T."/>
            <person name="Zouine M."/>
            <person name="Couve E."/>
            <person name="Lalioui L."/>
            <person name="Poyart C."/>
            <person name="Trieu-Cuot P."/>
            <person name="Kunst F."/>
        </authorList>
    </citation>
    <scope>NUCLEOTIDE SEQUENCE [LARGE SCALE GENOMIC DNA]</scope>
    <source>
        <strain>NEM316</strain>
    </source>
</reference>
<proteinExistence type="inferred from homology"/>
<sequence>MDIKLKDFEGPLDLLLHLVSKYEVDIYDVPIVEVIEQYLAYIATLQAMRLEVAGEYMLMASQLMLIKSRNLLPKVVESTPIEDDPEMELLSQLEEYRRFKVLSEELANQHQERAKYFSKPKQEVIFEDAILLHDKSVMDLFLTFSQMMSQKQKELSNSQTVIEKEDYRIEDMMIVIERHFNLKKKTTLQEVFADCQTKSEMITLFLAMLELIKLHQITVEQDSNFSQVILRKEEK</sequence>
<protein>
    <recommendedName>
        <fullName evidence="1">Segregation and condensation protein A</fullName>
    </recommendedName>
</protein>
<name>SCPA_STRA3</name>